<protein>
    <recommendedName>
        <fullName evidence="1">PF03932 family protein CutC</fullName>
    </recommendedName>
</protein>
<reference key="1">
    <citation type="journal article" date="2005" name="Nucleic Acids Res.">
        <title>Genome dynamics and diversity of Shigella species, the etiologic agents of bacillary dysentery.</title>
        <authorList>
            <person name="Yang F."/>
            <person name="Yang J."/>
            <person name="Zhang X."/>
            <person name="Chen L."/>
            <person name="Jiang Y."/>
            <person name="Yan Y."/>
            <person name="Tang X."/>
            <person name="Wang J."/>
            <person name="Xiong Z."/>
            <person name="Dong J."/>
            <person name="Xue Y."/>
            <person name="Zhu Y."/>
            <person name="Xu X."/>
            <person name="Sun L."/>
            <person name="Chen S."/>
            <person name="Nie H."/>
            <person name="Peng J."/>
            <person name="Xu J."/>
            <person name="Wang Y."/>
            <person name="Yuan Z."/>
            <person name="Wen Y."/>
            <person name="Yao Z."/>
            <person name="Shen Y."/>
            <person name="Qiang B."/>
            <person name="Hou Y."/>
            <person name="Yu J."/>
            <person name="Jin Q."/>
        </authorList>
    </citation>
    <scope>NUCLEOTIDE SEQUENCE [LARGE SCALE GENOMIC DNA]</scope>
    <source>
        <strain>Sb227</strain>
    </source>
</reference>
<name>CUTC_SHIBS</name>
<organism>
    <name type="scientific">Shigella boydii serotype 4 (strain Sb227)</name>
    <dbReference type="NCBI Taxonomy" id="300268"/>
    <lineage>
        <taxon>Bacteria</taxon>
        <taxon>Pseudomonadati</taxon>
        <taxon>Pseudomonadota</taxon>
        <taxon>Gammaproteobacteria</taxon>
        <taxon>Enterobacterales</taxon>
        <taxon>Enterobacteriaceae</taxon>
        <taxon>Shigella</taxon>
    </lineage>
</organism>
<gene>
    <name evidence="1" type="primary">cutC</name>
    <name type="ordered locus">SBO_1126</name>
</gene>
<accession>Q322J3</accession>
<evidence type="ECO:0000255" key="1">
    <source>
        <dbReference type="HAMAP-Rule" id="MF_00795"/>
    </source>
</evidence>
<comment type="subunit">
    <text evidence="1">Homodimer.</text>
</comment>
<comment type="subcellular location">
    <subcellularLocation>
        <location evidence="1">Cytoplasm</location>
    </subcellularLocation>
</comment>
<comment type="similarity">
    <text evidence="1">Belongs to the CutC family.</text>
</comment>
<comment type="caution">
    <text evidence="1">Once thought to be involved in copper homeostasis, experiments in E.coli have shown this is not the case.</text>
</comment>
<feature type="chain" id="PRO_1000046940" description="PF03932 family protein CutC">
    <location>
        <begin position="1"/>
        <end position="248"/>
    </location>
</feature>
<dbReference type="EMBL" id="CP000036">
    <property type="protein sequence ID" value="ABB65765.1"/>
    <property type="molecule type" value="Genomic_DNA"/>
</dbReference>
<dbReference type="RefSeq" id="WP_001185758.1">
    <property type="nucleotide sequence ID" value="NC_007613.1"/>
</dbReference>
<dbReference type="SMR" id="Q322J3"/>
<dbReference type="KEGG" id="sbo:SBO_1126"/>
<dbReference type="HOGENOM" id="CLU_050555_3_1_6"/>
<dbReference type="Proteomes" id="UP000007067">
    <property type="component" value="Chromosome"/>
</dbReference>
<dbReference type="GO" id="GO:0005737">
    <property type="term" value="C:cytoplasm"/>
    <property type="evidence" value="ECO:0007669"/>
    <property type="project" value="UniProtKB-SubCell"/>
</dbReference>
<dbReference type="GO" id="GO:0005507">
    <property type="term" value="F:copper ion binding"/>
    <property type="evidence" value="ECO:0007669"/>
    <property type="project" value="TreeGrafter"/>
</dbReference>
<dbReference type="FunFam" id="3.20.20.380:FF:000001">
    <property type="entry name" value="Copper homeostasis protein CutC"/>
    <property type="match status" value="1"/>
</dbReference>
<dbReference type="Gene3D" id="3.20.20.380">
    <property type="entry name" value="Copper homeostasis (CutC) domain"/>
    <property type="match status" value="1"/>
</dbReference>
<dbReference type="HAMAP" id="MF_00795">
    <property type="entry name" value="CutC"/>
    <property type="match status" value="1"/>
</dbReference>
<dbReference type="InterPro" id="IPR005627">
    <property type="entry name" value="CutC-like"/>
</dbReference>
<dbReference type="InterPro" id="IPR036822">
    <property type="entry name" value="CutC-like_dom_sf"/>
</dbReference>
<dbReference type="NCBIfam" id="NF008603">
    <property type="entry name" value="PRK11572.1"/>
    <property type="match status" value="1"/>
</dbReference>
<dbReference type="PANTHER" id="PTHR12598">
    <property type="entry name" value="COPPER HOMEOSTASIS PROTEIN CUTC"/>
    <property type="match status" value="1"/>
</dbReference>
<dbReference type="PANTHER" id="PTHR12598:SF0">
    <property type="entry name" value="COPPER HOMEOSTASIS PROTEIN CUTC HOMOLOG"/>
    <property type="match status" value="1"/>
</dbReference>
<dbReference type="Pfam" id="PF03932">
    <property type="entry name" value="CutC"/>
    <property type="match status" value="1"/>
</dbReference>
<dbReference type="SUPFAM" id="SSF110395">
    <property type="entry name" value="CutC-like"/>
    <property type="match status" value="1"/>
</dbReference>
<sequence length="248" mass="26644">MALLEICCYSMECALTAQQNGADRVELCAAPKEGGLTPSLGVLKSVRQWVTIPVHPIIRPRGGDFCYSDGEFAAILEDVRTVRELGFPGLVTGVLDVDGNVDMPRMEKIMAAAGPLAVTFHRAFDMCANPLNTLSNLAELGIARVLTSGQKSDALQGLSKIMELIAHRDAPIIMAGAGVRAENLHHFLDAGVLEVHSSAGAWQASPMRYRNQGLSMSSDAHADEYSRYVVDGAAVAEMKGIIERHQAK</sequence>
<keyword id="KW-0963">Cytoplasm</keyword>
<proteinExistence type="inferred from homology"/>